<protein>
    <recommendedName>
        <fullName evidence="1">Dephospho-CoA kinase</fullName>
        <ecNumber evidence="1">2.7.1.24</ecNumber>
    </recommendedName>
    <alternativeName>
        <fullName evidence="1">Dephosphocoenzyme A kinase</fullName>
    </alternativeName>
</protein>
<reference key="1">
    <citation type="journal article" date="2005" name="Nucleic Acids Res.">
        <title>Genome dynamics and diversity of Shigella species, the etiologic agents of bacillary dysentery.</title>
        <authorList>
            <person name="Yang F."/>
            <person name="Yang J."/>
            <person name="Zhang X."/>
            <person name="Chen L."/>
            <person name="Jiang Y."/>
            <person name="Yan Y."/>
            <person name="Tang X."/>
            <person name="Wang J."/>
            <person name="Xiong Z."/>
            <person name="Dong J."/>
            <person name="Xue Y."/>
            <person name="Zhu Y."/>
            <person name="Xu X."/>
            <person name="Sun L."/>
            <person name="Chen S."/>
            <person name="Nie H."/>
            <person name="Peng J."/>
            <person name="Xu J."/>
            <person name="Wang Y."/>
            <person name="Yuan Z."/>
            <person name="Wen Y."/>
            <person name="Yao Z."/>
            <person name="Shen Y."/>
            <person name="Qiang B."/>
            <person name="Hou Y."/>
            <person name="Yu J."/>
            <person name="Jin Q."/>
        </authorList>
    </citation>
    <scope>NUCLEOTIDE SEQUENCE [LARGE SCALE GENOMIC DNA]</scope>
    <source>
        <strain>Sd197</strain>
    </source>
</reference>
<dbReference type="EC" id="2.7.1.24" evidence="1"/>
<dbReference type="EMBL" id="CP000034">
    <property type="protein sequence ID" value="ABB60368.1"/>
    <property type="molecule type" value="Genomic_DNA"/>
</dbReference>
<dbReference type="RefSeq" id="WP_001269520.1">
    <property type="nucleotide sequence ID" value="NC_007606.1"/>
</dbReference>
<dbReference type="RefSeq" id="YP_401857.1">
    <property type="nucleotide sequence ID" value="NC_007606.1"/>
</dbReference>
<dbReference type="SMR" id="Q32JY9"/>
<dbReference type="STRING" id="300267.SDY_0133"/>
<dbReference type="EnsemblBacteria" id="ABB60368">
    <property type="protein sequence ID" value="ABB60368"/>
    <property type="gene ID" value="SDY_0133"/>
</dbReference>
<dbReference type="GeneID" id="93777332"/>
<dbReference type="KEGG" id="sdy:SDY_0133"/>
<dbReference type="PATRIC" id="fig|300267.13.peg.151"/>
<dbReference type="HOGENOM" id="CLU_057180_1_2_6"/>
<dbReference type="UniPathway" id="UPA00241">
    <property type="reaction ID" value="UER00356"/>
</dbReference>
<dbReference type="Proteomes" id="UP000002716">
    <property type="component" value="Chromosome"/>
</dbReference>
<dbReference type="GO" id="GO:0005737">
    <property type="term" value="C:cytoplasm"/>
    <property type="evidence" value="ECO:0007669"/>
    <property type="project" value="UniProtKB-SubCell"/>
</dbReference>
<dbReference type="GO" id="GO:0005524">
    <property type="term" value="F:ATP binding"/>
    <property type="evidence" value="ECO:0007669"/>
    <property type="project" value="UniProtKB-UniRule"/>
</dbReference>
<dbReference type="GO" id="GO:0004140">
    <property type="term" value="F:dephospho-CoA kinase activity"/>
    <property type="evidence" value="ECO:0007669"/>
    <property type="project" value="UniProtKB-UniRule"/>
</dbReference>
<dbReference type="GO" id="GO:0015937">
    <property type="term" value="P:coenzyme A biosynthetic process"/>
    <property type="evidence" value="ECO:0007669"/>
    <property type="project" value="UniProtKB-UniRule"/>
</dbReference>
<dbReference type="CDD" id="cd02022">
    <property type="entry name" value="DPCK"/>
    <property type="match status" value="1"/>
</dbReference>
<dbReference type="FunFam" id="3.40.50.300:FF:000518">
    <property type="entry name" value="Dephospho-CoA kinase"/>
    <property type="match status" value="1"/>
</dbReference>
<dbReference type="Gene3D" id="3.40.50.300">
    <property type="entry name" value="P-loop containing nucleotide triphosphate hydrolases"/>
    <property type="match status" value="1"/>
</dbReference>
<dbReference type="HAMAP" id="MF_00376">
    <property type="entry name" value="Dephospho_CoA_kinase"/>
    <property type="match status" value="1"/>
</dbReference>
<dbReference type="InterPro" id="IPR001977">
    <property type="entry name" value="Depp_CoAkinase"/>
</dbReference>
<dbReference type="InterPro" id="IPR027417">
    <property type="entry name" value="P-loop_NTPase"/>
</dbReference>
<dbReference type="NCBIfam" id="TIGR00152">
    <property type="entry name" value="dephospho-CoA kinase"/>
    <property type="match status" value="1"/>
</dbReference>
<dbReference type="PANTHER" id="PTHR10695:SF46">
    <property type="entry name" value="BIFUNCTIONAL COENZYME A SYNTHASE-RELATED"/>
    <property type="match status" value="1"/>
</dbReference>
<dbReference type="PANTHER" id="PTHR10695">
    <property type="entry name" value="DEPHOSPHO-COA KINASE-RELATED"/>
    <property type="match status" value="1"/>
</dbReference>
<dbReference type="Pfam" id="PF01121">
    <property type="entry name" value="CoaE"/>
    <property type="match status" value="1"/>
</dbReference>
<dbReference type="SUPFAM" id="SSF52540">
    <property type="entry name" value="P-loop containing nucleoside triphosphate hydrolases"/>
    <property type="match status" value="1"/>
</dbReference>
<dbReference type="PROSITE" id="PS51219">
    <property type="entry name" value="DPCK"/>
    <property type="match status" value="1"/>
</dbReference>
<feature type="chain" id="PRO_0000243340" description="Dephospho-CoA kinase">
    <location>
        <begin position="1"/>
        <end position="206"/>
    </location>
</feature>
<feature type="domain" description="DPCK" evidence="1">
    <location>
        <begin position="4"/>
        <end position="200"/>
    </location>
</feature>
<feature type="binding site" evidence="1">
    <location>
        <begin position="12"/>
        <end position="17"/>
    </location>
    <ligand>
        <name>ATP</name>
        <dbReference type="ChEBI" id="CHEBI:30616"/>
    </ligand>
</feature>
<proteinExistence type="inferred from homology"/>
<accession>Q32JY9</accession>
<evidence type="ECO:0000255" key="1">
    <source>
        <dbReference type="HAMAP-Rule" id="MF_00376"/>
    </source>
</evidence>
<gene>
    <name evidence="1" type="primary">coaE</name>
    <name type="ordered locus">SDY_0133</name>
</gene>
<sequence length="206" mass="22622">MRYIVALTGGIGSGKSTVANAFADLGINVIDADIIARQVVEPGAPALHAIADHFGANMIAADGTLQRRALRERIFANPEEKNWLNALLHPLIQQETQHQIQQATSPYVLWVVPLLVENSLYKKANRVLVVDVSPETQLKRTMQRDDVTREHVEQILAAQATREARLAVADDVIDNNGAPDAIASDVARLHAHYLQLASQFVSQEKP</sequence>
<name>COAE_SHIDS</name>
<keyword id="KW-0067">ATP-binding</keyword>
<keyword id="KW-0173">Coenzyme A biosynthesis</keyword>
<keyword id="KW-0963">Cytoplasm</keyword>
<keyword id="KW-0418">Kinase</keyword>
<keyword id="KW-0547">Nucleotide-binding</keyword>
<keyword id="KW-1185">Reference proteome</keyword>
<keyword id="KW-0808">Transferase</keyword>
<comment type="function">
    <text evidence="1">Catalyzes the phosphorylation of the 3'-hydroxyl group of dephosphocoenzyme A to form coenzyme A.</text>
</comment>
<comment type="catalytic activity">
    <reaction evidence="1">
        <text>3'-dephospho-CoA + ATP = ADP + CoA + H(+)</text>
        <dbReference type="Rhea" id="RHEA:18245"/>
        <dbReference type="ChEBI" id="CHEBI:15378"/>
        <dbReference type="ChEBI" id="CHEBI:30616"/>
        <dbReference type="ChEBI" id="CHEBI:57287"/>
        <dbReference type="ChEBI" id="CHEBI:57328"/>
        <dbReference type="ChEBI" id="CHEBI:456216"/>
        <dbReference type="EC" id="2.7.1.24"/>
    </reaction>
</comment>
<comment type="pathway">
    <text evidence="1">Cofactor biosynthesis; coenzyme A biosynthesis; CoA from (R)-pantothenate: step 5/5.</text>
</comment>
<comment type="subcellular location">
    <subcellularLocation>
        <location evidence="1">Cytoplasm</location>
    </subcellularLocation>
</comment>
<comment type="similarity">
    <text evidence="1">Belongs to the CoaE family.</text>
</comment>
<organism>
    <name type="scientific">Shigella dysenteriae serotype 1 (strain Sd197)</name>
    <dbReference type="NCBI Taxonomy" id="300267"/>
    <lineage>
        <taxon>Bacteria</taxon>
        <taxon>Pseudomonadati</taxon>
        <taxon>Pseudomonadota</taxon>
        <taxon>Gammaproteobacteria</taxon>
        <taxon>Enterobacterales</taxon>
        <taxon>Enterobacteriaceae</taxon>
        <taxon>Shigella</taxon>
    </lineage>
</organism>